<reference key="1">
    <citation type="journal article" date="2004" name="Proc. Natl. Acad. Sci. U.S.A.">
        <title>Complete genomes of two clinical Staphylococcus aureus strains: evidence for the rapid evolution of virulence and drug resistance.</title>
        <authorList>
            <person name="Holden M.T.G."/>
            <person name="Feil E.J."/>
            <person name="Lindsay J.A."/>
            <person name="Peacock S.J."/>
            <person name="Day N.P.J."/>
            <person name="Enright M.C."/>
            <person name="Foster T.J."/>
            <person name="Moore C.E."/>
            <person name="Hurst L."/>
            <person name="Atkin R."/>
            <person name="Barron A."/>
            <person name="Bason N."/>
            <person name="Bentley S.D."/>
            <person name="Chillingworth C."/>
            <person name="Chillingworth T."/>
            <person name="Churcher C."/>
            <person name="Clark L."/>
            <person name="Corton C."/>
            <person name="Cronin A."/>
            <person name="Doggett J."/>
            <person name="Dowd L."/>
            <person name="Feltwell T."/>
            <person name="Hance Z."/>
            <person name="Harris B."/>
            <person name="Hauser H."/>
            <person name="Holroyd S."/>
            <person name="Jagels K."/>
            <person name="James K.D."/>
            <person name="Lennard N."/>
            <person name="Line A."/>
            <person name="Mayes R."/>
            <person name="Moule S."/>
            <person name="Mungall K."/>
            <person name="Ormond D."/>
            <person name="Quail M.A."/>
            <person name="Rabbinowitsch E."/>
            <person name="Rutherford K.M."/>
            <person name="Sanders M."/>
            <person name="Sharp S."/>
            <person name="Simmonds M."/>
            <person name="Stevens K."/>
            <person name="Whitehead S."/>
            <person name="Barrell B.G."/>
            <person name="Spratt B.G."/>
            <person name="Parkhill J."/>
        </authorList>
    </citation>
    <scope>NUCLEOTIDE SEQUENCE [LARGE SCALE GENOMIC DNA]</scope>
    <source>
        <strain>MRSA252</strain>
    </source>
</reference>
<organism>
    <name type="scientific">Staphylococcus aureus (strain MRSA252)</name>
    <dbReference type="NCBI Taxonomy" id="282458"/>
    <lineage>
        <taxon>Bacteria</taxon>
        <taxon>Bacillati</taxon>
        <taxon>Bacillota</taxon>
        <taxon>Bacilli</taxon>
        <taxon>Bacillales</taxon>
        <taxon>Staphylococcaceae</taxon>
        <taxon>Staphylococcus</taxon>
    </lineage>
</organism>
<keyword id="KW-1003">Cell membrane</keyword>
<keyword id="KW-0406">Ion transport</keyword>
<keyword id="KW-0472">Membrane</keyword>
<keyword id="KW-0769">Symport</keyword>
<keyword id="KW-0812">Transmembrane</keyword>
<keyword id="KW-1133">Transmembrane helix</keyword>
<keyword id="KW-0813">Transport</keyword>
<gene>
    <name evidence="1" type="primary">mntH</name>
    <name type="ordered locus">SAR1079</name>
</gene>
<evidence type="ECO:0000255" key="1">
    <source>
        <dbReference type="HAMAP-Rule" id="MF_00221"/>
    </source>
</evidence>
<proteinExistence type="inferred from homology"/>
<sequence length="450" mass="49670">MNNKRHSTNEQLSLDEINNTIKFDHRSSNKQKFLSFLGPGLLVAGGYMDSGNWITSMQGGAQYGYTLLFGNLISRLSAMLLQSMTVRLGIATGMDLAQMTRHYLSRPIAIIFWIIAELAIIATDIAEVIGSAIALNLLFNIPLIVGALITVLDVFLLLFIMKYGFRKIEAIVGTLIFTVLFIFIFEVYISSPQLNAVLNGFIPHSEIITNNGILYIALGIIGATIMPHNLYLHSSIVQSRTYSRHNNEEKAQAIKFATIDSNIQLSIAFVVNCLLLVLGASLFFNSNADDLGGFYDLYHALKTEPVLGATMGAIMSTLFAVALLASGQNSTITGTLAGQIVMEGFLRLHIPNWLRRLITRSLAVIPVIVCLIIFKGNAAKIEQLLVFSQVFLSIALPFCLIPLQLATSNKDLMGPFYNKTWVNIISWTLIIILSILNVYLIVQTFQELQG</sequence>
<comment type="function">
    <text evidence="1">H(+)-stimulated, divalent metal cation uptake system.</text>
</comment>
<comment type="subcellular location">
    <subcellularLocation>
        <location evidence="1">Cell membrane</location>
        <topology evidence="1">Multi-pass membrane protein</topology>
    </subcellularLocation>
</comment>
<comment type="similarity">
    <text evidence="1">Belongs to the NRAMP family.</text>
</comment>
<protein>
    <recommendedName>
        <fullName evidence="1">Divalent metal cation transporter MntH</fullName>
    </recommendedName>
</protein>
<name>MNTH_STAAR</name>
<dbReference type="EMBL" id="BX571856">
    <property type="protein sequence ID" value="CAG40081.1"/>
    <property type="molecule type" value="Genomic_DNA"/>
</dbReference>
<dbReference type="RefSeq" id="WP_001060831.1">
    <property type="nucleotide sequence ID" value="NC_002952.2"/>
</dbReference>
<dbReference type="SMR" id="Q6GHY0"/>
<dbReference type="KEGG" id="sar:SAR1079"/>
<dbReference type="HOGENOM" id="CLU_020088_2_0_9"/>
<dbReference type="Proteomes" id="UP000000596">
    <property type="component" value="Chromosome"/>
</dbReference>
<dbReference type="GO" id="GO:0005886">
    <property type="term" value="C:plasma membrane"/>
    <property type="evidence" value="ECO:0007669"/>
    <property type="project" value="UniProtKB-SubCell"/>
</dbReference>
<dbReference type="GO" id="GO:0015086">
    <property type="term" value="F:cadmium ion transmembrane transporter activity"/>
    <property type="evidence" value="ECO:0007669"/>
    <property type="project" value="TreeGrafter"/>
</dbReference>
<dbReference type="GO" id="GO:0005384">
    <property type="term" value="F:manganese ion transmembrane transporter activity"/>
    <property type="evidence" value="ECO:0007669"/>
    <property type="project" value="TreeGrafter"/>
</dbReference>
<dbReference type="GO" id="GO:0046872">
    <property type="term" value="F:metal ion binding"/>
    <property type="evidence" value="ECO:0007669"/>
    <property type="project" value="UniProtKB-UniRule"/>
</dbReference>
<dbReference type="GO" id="GO:0015293">
    <property type="term" value="F:symporter activity"/>
    <property type="evidence" value="ECO:0007669"/>
    <property type="project" value="UniProtKB-UniRule"/>
</dbReference>
<dbReference type="GO" id="GO:0034755">
    <property type="term" value="P:iron ion transmembrane transport"/>
    <property type="evidence" value="ECO:0007669"/>
    <property type="project" value="TreeGrafter"/>
</dbReference>
<dbReference type="HAMAP" id="MF_00221">
    <property type="entry name" value="NRAMP"/>
    <property type="match status" value="1"/>
</dbReference>
<dbReference type="InterPro" id="IPR001046">
    <property type="entry name" value="NRAMP_fam"/>
</dbReference>
<dbReference type="NCBIfam" id="TIGR01197">
    <property type="entry name" value="nramp"/>
    <property type="match status" value="1"/>
</dbReference>
<dbReference type="NCBIfam" id="NF037982">
    <property type="entry name" value="Nramp_1"/>
    <property type="match status" value="1"/>
</dbReference>
<dbReference type="NCBIfam" id="NF001923">
    <property type="entry name" value="PRK00701.1"/>
    <property type="match status" value="1"/>
</dbReference>
<dbReference type="PANTHER" id="PTHR11706:SF33">
    <property type="entry name" value="NATURAL RESISTANCE-ASSOCIATED MACROPHAGE PROTEIN 2"/>
    <property type="match status" value="1"/>
</dbReference>
<dbReference type="PANTHER" id="PTHR11706">
    <property type="entry name" value="SOLUTE CARRIER PROTEIN FAMILY 11 MEMBER"/>
    <property type="match status" value="1"/>
</dbReference>
<dbReference type="Pfam" id="PF01566">
    <property type="entry name" value="Nramp"/>
    <property type="match status" value="1"/>
</dbReference>
<dbReference type="PRINTS" id="PR00447">
    <property type="entry name" value="NATRESASSCMP"/>
</dbReference>
<accession>Q6GHY0</accession>
<feature type="chain" id="PRO_0000212637" description="Divalent metal cation transporter MntH">
    <location>
        <begin position="1"/>
        <end position="450"/>
    </location>
</feature>
<feature type="transmembrane region" description="Helical" evidence="1">
    <location>
        <begin position="34"/>
        <end position="54"/>
    </location>
</feature>
<feature type="transmembrane region" description="Helical" evidence="1">
    <location>
        <begin position="59"/>
        <end position="81"/>
    </location>
</feature>
<feature type="transmembrane region" description="Helical" evidence="1">
    <location>
        <begin position="108"/>
        <end position="128"/>
    </location>
</feature>
<feature type="transmembrane region" description="Helical" evidence="1">
    <location>
        <begin position="141"/>
        <end position="161"/>
    </location>
</feature>
<feature type="transmembrane region" description="Helical" evidence="1">
    <location>
        <begin position="170"/>
        <end position="190"/>
    </location>
</feature>
<feature type="transmembrane region" description="Helical" evidence="1">
    <location>
        <begin position="212"/>
        <end position="232"/>
    </location>
</feature>
<feature type="transmembrane region" description="Helical" evidence="1">
    <location>
        <begin position="263"/>
        <end position="283"/>
    </location>
</feature>
<feature type="transmembrane region" description="Helical" evidence="1">
    <location>
        <begin position="305"/>
        <end position="325"/>
    </location>
</feature>
<feature type="transmembrane region" description="Helical" evidence="1">
    <location>
        <begin position="361"/>
        <end position="381"/>
    </location>
</feature>
<feature type="transmembrane region" description="Helical" evidence="1">
    <location>
        <begin position="383"/>
        <end position="403"/>
    </location>
</feature>
<feature type="transmembrane region" description="Helical" evidence="1">
    <location>
        <begin position="422"/>
        <end position="442"/>
    </location>
</feature>